<dbReference type="EMBL" id="Y09264">
    <property type="protein sequence ID" value="CAA70459.1"/>
    <property type="molecule type" value="mRNA"/>
</dbReference>
<dbReference type="EMBL" id="AF292101">
    <property type="protein sequence ID" value="AAG29499.1"/>
    <property type="molecule type" value="mRNA"/>
</dbReference>
<dbReference type="RefSeq" id="NP_990050.1">
    <property type="nucleotide sequence ID" value="NM_204719.1"/>
</dbReference>
<dbReference type="FunCoup" id="Q9DF69">
    <property type="interactions" value="113"/>
</dbReference>
<dbReference type="IntAct" id="Q9DF69">
    <property type="interactions" value="1"/>
</dbReference>
<dbReference type="STRING" id="9031.ENSGALP00000049190"/>
<dbReference type="GlyCosmos" id="Q9DF69">
    <property type="glycosylation" value="4 sites, No reported glycans"/>
</dbReference>
<dbReference type="GlyGen" id="Q9DF69">
    <property type="glycosylation" value="9 sites"/>
</dbReference>
<dbReference type="PaxDb" id="9031-ENSGALP00000038516"/>
<dbReference type="KEGG" id="gga:395466"/>
<dbReference type="VEuPathDB" id="HostDB:geneid_395466"/>
<dbReference type="eggNOG" id="ENOG502QXSB">
    <property type="taxonomic scope" value="Eukaryota"/>
</dbReference>
<dbReference type="InParanoid" id="Q9DF69"/>
<dbReference type="OrthoDB" id="9935774at2759"/>
<dbReference type="PhylomeDB" id="Q9DF69"/>
<dbReference type="Proteomes" id="UP000000539">
    <property type="component" value="Unassembled WGS sequence"/>
</dbReference>
<dbReference type="GO" id="GO:0043231">
    <property type="term" value="C:intracellular membrane-bounded organelle"/>
    <property type="evidence" value="ECO:0007669"/>
    <property type="project" value="UniProtKB-ARBA"/>
</dbReference>
<dbReference type="GO" id="GO:0005886">
    <property type="term" value="C:plasma membrane"/>
    <property type="evidence" value="ECO:0007669"/>
    <property type="project" value="UniProtKB-SubCell"/>
</dbReference>
<dbReference type="GO" id="GO:0045202">
    <property type="term" value="C:synapse"/>
    <property type="evidence" value="ECO:0000318"/>
    <property type="project" value="GO_Central"/>
</dbReference>
<dbReference type="GO" id="GO:0030154">
    <property type="term" value="P:cell differentiation"/>
    <property type="evidence" value="ECO:0007669"/>
    <property type="project" value="UniProtKB-KW"/>
</dbReference>
<dbReference type="GO" id="GO:0048858">
    <property type="term" value="P:cell projection morphogenesis"/>
    <property type="evidence" value="ECO:0000318"/>
    <property type="project" value="GO_Central"/>
</dbReference>
<dbReference type="GO" id="GO:0007399">
    <property type="term" value="P:nervous system development"/>
    <property type="evidence" value="ECO:0007669"/>
    <property type="project" value="UniProtKB-KW"/>
</dbReference>
<dbReference type="InterPro" id="IPR010555">
    <property type="entry name" value="CSPG5_S_attach_dom"/>
</dbReference>
<dbReference type="InterPro" id="IPR009505">
    <property type="entry name" value="Neural_ProG_Cyt"/>
</dbReference>
<dbReference type="PANTHER" id="PTHR15381:SF1">
    <property type="entry name" value="CHONDROITIN SULFATE PROTEOGLYCAN 5"/>
    <property type="match status" value="1"/>
</dbReference>
<dbReference type="PANTHER" id="PTHR15381">
    <property type="entry name" value="CHONDROITIN SULFATE PROTEOGLYCAN 5 -RELATED"/>
    <property type="match status" value="1"/>
</dbReference>
<dbReference type="Pfam" id="PF06566">
    <property type="entry name" value="Chon_Sulph_att"/>
    <property type="match status" value="1"/>
</dbReference>
<dbReference type="Pfam" id="PF06567">
    <property type="entry name" value="Neural_ProG_Cyt"/>
    <property type="match status" value="1"/>
</dbReference>
<gene>
    <name type="primary">CSPG5</name>
    <name type="synonym">CALEB</name>
</gene>
<accession>Q9DF69</accession>
<accession>O13003</accession>
<comment type="function">
    <text evidence="5">May function as a growth and differentiation factor involved in neuritogenesis and more particularly in neurite extension.</text>
</comment>
<comment type="subunit">
    <text>Binds TNC and TNR. The 80 kDa form but not the 140 kDa form can bind TNC and TNR when expressed at the cell surface.</text>
</comment>
<comment type="subcellular location">
    <subcellularLocation>
        <location evidence="5">Cell membrane</location>
        <topology evidence="5">Single-pass type I membrane protein</topology>
    </subcellularLocation>
</comment>
<comment type="alternative products">
    <event type="alternative splicing"/>
    <isoform>
        <id>Q9DF69-1</id>
        <name>1</name>
        <name>B</name>
        <sequence type="displayed"/>
    </isoform>
    <isoform>
        <id>Q9DF69-2</id>
        <name>2</name>
        <name>A</name>
        <sequence type="described" ref="VSP_015766 VSP_015767"/>
    </isoform>
</comment>
<comment type="tissue specificity">
    <text evidence="5">Expressed in astroglial and neuronal surfaces in different parts of the embryonic brain. Expressed in adult brain and retina (at protein level).</text>
</comment>
<comment type="developmental stage">
    <text evidence="5">The 80 kDa and 200 kDa forms were detected only during embryonic development. The 80 kDa form reaches a maximum of expression at 14 dpc/15 dpc and then decreases gradually. The 140 kDa form is already detected at 7 dpc. The 130 and 140 kDa forms reach their maximal expression at 20 dpc (at protein level).</text>
</comment>
<comment type="PTM">
    <text>Different forms exist: the 140 kDa form (also reported as 130 kDa), which probably consists of the entire protein, and the 38 and 80 kDa forms, which are probably cleaved in their N-terminus. Increase in synaptic activity, results in shedding of the extracellular domain and expression at the cell surface of a 38 kDa form. A form of 200 kDa has also been reported, which is probably hyperglycosylated.</text>
</comment>
<comment type="PTM">
    <text evidence="5">N-glycosylated.</text>
</comment>
<comment type="PTM">
    <text evidence="5">O-glycosylated; contains chondroitin sulfate glycans. Part-time proteoglycan, the 200 kDa form is the only one containing chondroitin sulfate glycans.</text>
</comment>
<evidence type="ECO:0000250" key="1"/>
<evidence type="ECO:0000255" key="2"/>
<evidence type="ECO:0000256" key="3">
    <source>
        <dbReference type="SAM" id="MobiDB-lite"/>
    </source>
</evidence>
<evidence type="ECO:0000269" key="4">
    <source>
    </source>
</evidence>
<evidence type="ECO:0000269" key="5">
    <source>
    </source>
</evidence>
<evidence type="ECO:0000303" key="6">
    <source>
    </source>
</evidence>
<sequence>MGVGGTSASDTALSLCPTAPEWPPRNGSSGRAWGGPLQSGAPINSTDPLGPQLEPPGGGPATADPTVGCMGCSGEGAASSVPPVPDAAQDPRLGVTGPTDGDGGVVALGSPEEVGSGEQPTRAGVGPTEGLTPRPPGLPSPGLGLSSPGPNLGLPSLDLPNPNLGLPDPNLGLPNPSLGLPSPGPTPDRPIPNPNPSLDLPDPGLAIQTPNLGLSNPNIPLPSPSPGPGTEPDLLPVAEDSEVSMELPQPSSSPAPAQRARGRTDRTWLGAPEPISAAPGTAEPPEIIDVDYYDVFDGGHGPGGGHGAGGAAQREPGGAATPWGLHELYDDFTPFDEADFYPTTSFYAEGDDDAEEELEEDEEEEEEEDGGLEDENGYRPPASAAPRVPPPPSPTEGTPMARPRPGERAVPENSSECRSGYVRHNSSCRSVCDLVPSYCHNGGQCYLVESHGAFCRCNTQDYTWHKGTRCEAIVTDFQVLCVAVGSAALVLLLLFMLTVFFAKKLYLLKTENSKLRKTKYRTPSELHNDNFSLSTIAEGSHPNDDPGAPHKLQDPLKPGLKDEEPLSILSTAPEEGSKGEPGGCGVPCLHNNLG</sequence>
<keyword id="KW-0025">Alternative splicing</keyword>
<keyword id="KW-1003">Cell membrane</keyword>
<keyword id="KW-0217">Developmental protein</keyword>
<keyword id="KW-0221">Differentiation</keyword>
<keyword id="KW-0903">Direct protein sequencing</keyword>
<keyword id="KW-1015">Disulfide bond</keyword>
<keyword id="KW-0245">EGF-like domain</keyword>
<keyword id="KW-0325">Glycoprotein</keyword>
<keyword id="KW-0341">Growth regulation</keyword>
<keyword id="KW-0472">Membrane</keyword>
<keyword id="KW-0524">Neurogenesis</keyword>
<keyword id="KW-0654">Proteoglycan</keyword>
<keyword id="KW-1185">Reference proteome</keyword>
<keyword id="KW-0732">Signal</keyword>
<keyword id="KW-0812">Transmembrane</keyword>
<keyword id="KW-1133">Transmembrane helix</keyword>
<organism>
    <name type="scientific">Gallus gallus</name>
    <name type="common">Chicken</name>
    <dbReference type="NCBI Taxonomy" id="9031"/>
    <lineage>
        <taxon>Eukaryota</taxon>
        <taxon>Metazoa</taxon>
        <taxon>Chordata</taxon>
        <taxon>Craniata</taxon>
        <taxon>Vertebrata</taxon>
        <taxon>Euteleostomi</taxon>
        <taxon>Archelosauria</taxon>
        <taxon>Archosauria</taxon>
        <taxon>Dinosauria</taxon>
        <taxon>Saurischia</taxon>
        <taxon>Theropoda</taxon>
        <taxon>Coelurosauria</taxon>
        <taxon>Aves</taxon>
        <taxon>Neognathae</taxon>
        <taxon>Galloanserae</taxon>
        <taxon>Galliformes</taxon>
        <taxon>Phasianidae</taxon>
        <taxon>Phasianinae</taxon>
        <taxon>Gallus</taxon>
    </lineage>
</organism>
<protein>
    <recommendedName>
        <fullName>Chondroitin sulfate proteoglycan 5</fullName>
    </recommendedName>
    <alternativeName>
        <fullName>Acidic leucine-rich EGF-like domain-containing brain protein</fullName>
    </alternativeName>
    <component>
        <recommendedName>
            <fullName>Chondroitin sulfate proteoglycan 5, 38 kDa form</fullName>
        </recommendedName>
    </component>
    <component>
        <recommendedName>
            <fullName>Chondroitin sulfate proteoglycan 5, 80 kDa form</fullName>
        </recommendedName>
    </component>
</protein>
<reference key="1">
    <citation type="journal article" date="1997" name="J. Cell Biol.">
        <title>Chicken acidic leucine-rich EGF-like domain containing brain protein (CALEB), a neural member of the EGF family of differentiation factors, is implicated in neurite formation.</title>
        <authorList>
            <person name="Schumacher S."/>
            <person name="Volkmer H."/>
            <person name="Buck F."/>
            <person name="Otto A."/>
            <person name="Tarnok A."/>
            <person name="Roth S."/>
            <person name="Rathjen F.G."/>
        </authorList>
    </citation>
    <scope>NUCLEOTIDE SEQUENCE [MRNA] (ISOFORM 2)</scope>
    <scope>PROTEIN SEQUENCE OF 19-32; 158-166; 260-275; 339-348; 388-400; 413-423; 457-466 AND 520-532</scope>
    <scope>GLYCOSYLATION</scope>
    <scope>TISSUE SPECIFICITY</scope>
    <scope>SUBCELLULAR LOCATION</scope>
    <scope>DEVELOPMENTAL STAGE</scope>
    <scope>INTERACTION WITH TNC AND TNR</scope>
    <scope>FUNCTION</scope>
    <source>
        <tissue>Eye</tissue>
    </source>
</reference>
<reference key="2">
    <citation type="journal article" date="2001" name="J. Biol. Chem.">
        <title>CALEB binds via its acidic stretch to the fibrinogen-like domain of tenascin-C or tenascin-R and its expression is dynamically regulated after optic nerve lesion.</title>
        <authorList>
            <person name="Schumacher S."/>
            <person name="Jung M."/>
            <person name="Noerenberg U."/>
            <person name="Dorner A."/>
            <person name="Chiquet-Ehrismann R."/>
            <person name="Stuermer C.A.O."/>
            <person name="Rathjen F.G."/>
        </authorList>
    </citation>
    <scope>NUCLEOTIDE SEQUENCE [MRNA] (ISOFORM 1)</scope>
    <scope>DOMAIN</scope>
    <scope>INTERACTION WITH TNC AND TNR</scope>
    <source>
        <tissue>Brain</tissue>
    </source>
</reference>
<reference key="3">
    <citation type="journal article" date="2003" name="J. Neurochem.">
        <title>Regulated binding of the fibrinogen-like domains of tenascin-R and tenascin-C to the neural EGF family member CALEB.</title>
        <authorList>
            <person name="Schumacher S."/>
            <person name="Stuebe E.-M."/>
        </authorList>
    </citation>
    <scope>INTERACTION WITH TNR</scope>
    <scope>MUTAGENESIS OF LEU-372 AND GLU-375</scope>
</reference>
<reference key="4">
    <citation type="journal article" date="2005" name="Neuron">
        <title>Impaired synapse function during postnatal development in the absence of CALEB, an EGF-like protein processed by neuronal activity.</title>
        <authorList>
            <person name="Juettner R."/>
            <person name="More M.I."/>
            <person name="Das D."/>
            <person name="Babich A."/>
            <person name="Meier J."/>
            <person name="Henning M."/>
            <person name="Erdmann B."/>
            <person name="Mueller E.-C."/>
            <person name="Otto A."/>
            <person name="Grantyn R."/>
            <person name="Rathjen F.G."/>
        </authorList>
    </citation>
    <scope>IDENTIFICATION BY MASS SPECTROMETRY</scope>
    <scope>CELL SURFACE PROCESSING</scope>
</reference>
<name>CSPG5_CHICK</name>
<proteinExistence type="evidence at protein level"/>
<feature type="signal peptide" evidence="5">
    <location>
        <begin position="1"/>
        <end position="18"/>
    </location>
</feature>
<feature type="chain" id="PRO_0000042154" description="Chondroitin sulfate proteoglycan 5">
    <location>
        <begin position="19"/>
        <end position="594"/>
    </location>
</feature>
<feature type="chain" id="PRO_0000042155" description="Chondroitin sulfate proteoglycan 5, 38 kDa form">
    <location>
        <begin status="unknown"/>
        <end position="594"/>
    </location>
</feature>
<feature type="chain" id="PRO_0000042156" description="Chondroitin sulfate proteoglycan 5, 80 kDa form">
    <location>
        <begin status="unknown"/>
        <end position="594"/>
    </location>
</feature>
<feature type="topological domain" description="Extracellular" evidence="2">
    <location>
        <begin position="19"/>
        <end position="481"/>
    </location>
</feature>
<feature type="transmembrane region" description="Helical" evidence="2">
    <location>
        <begin position="482"/>
        <end position="502"/>
    </location>
</feature>
<feature type="topological domain" description="Cytoplasmic" evidence="2">
    <location>
        <begin position="503"/>
        <end position="594"/>
    </location>
</feature>
<feature type="domain" description="EGF-like">
    <location>
        <begin position="429"/>
        <end position="471"/>
    </location>
</feature>
<feature type="region of interest" description="Disordered" evidence="3">
    <location>
        <begin position="1"/>
        <end position="325"/>
    </location>
</feature>
<feature type="region of interest" description="Interaction with TNC and TNR">
    <location>
        <begin position="338"/>
        <end position="377"/>
    </location>
</feature>
<feature type="region of interest" description="Disordered" evidence="3">
    <location>
        <begin position="343"/>
        <end position="418"/>
    </location>
</feature>
<feature type="region of interest" description="Disordered" evidence="3">
    <location>
        <begin position="535"/>
        <end position="594"/>
    </location>
</feature>
<feature type="compositionally biased region" description="Polar residues" evidence="3">
    <location>
        <begin position="1"/>
        <end position="12"/>
    </location>
</feature>
<feature type="compositionally biased region" description="Low complexity" evidence="3">
    <location>
        <begin position="140"/>
        <end position="181"/>
    </location>
</feature>
<feature type="compositionally biased region" description="Pro residues" evidence="3">
    <location>
        <begin position="182"/>
        <end position="195"/>
    </location>
</feature>
<feature type="compositionally biased region" description="Pro residues" evidence="3">
    <location>
        <begin position="219"/>
        <end position="229"/>
    </location>
</feature>
<feature type="compositionally biased region" description="Low complexity" evidence="3">
    <location>
        <begin position="248"/>
        <end position="259"/>
    </location>
</feature>
<feature type="compositionally biased region" description="Gly residues" evidence="3">
    <location>
        <begin position="298"/>
        <end position="310"/>
    </location>
</feature>
<feature type="compositionally biased region" description="Acidic residues" evidence="3">
    <location>
        <begin position="349"/>
        <end position="375"/>
    </location>
</feature>
<feature type="compositionally biased region" description="Basic and acidic residues" evidence="3">
    <location>
        <begin position="541"/>
        <end position="564"/>
    </location>
</feature>
<feature type="glycosylation site" description="N-linked (GlcNAc...) asparagine" evidence="2">
    <location>
        <position position="26"/>
    </location>
</feature>
<feature type="glycosylation site" description="N-linked (GlcNAc...) asparagine" evidence="2">
    <location>
        <position position="44"/>
    </location>
</feature>
<feature type="glycosylation site" description="N-linked (GlcNAc...) asparagine" evidence="2">
    <location>
        <position position="413"/>
    </location>
</feature>
<feature type="glycosylation site" description="N-linked (GlcNAc...) asparagine" evidence="2">
    <location>
        <position position="425"/>
    </location>
</feature>
<feature type="disulfide bond" evidence="1">
    <location>
        <begin position="432"/>
        <end position="445"/>
    </location>
</feature>
<feature type="disulfide bond" evidence="1">
    <location>
        <begin position="439"/>
        <end position="455"/>
    </location>
</feature>
<feature type="disulfide bond" evidence="1">
    <location>
        <begin position="457"/>
        <end position="470"/>
    </location>
</feature>
<feature type="splice variant" id="VSP_015766" description="In isoform 2." evidence="6">
    <original>DDPGAPHK</original>
    <variation>REAQHRAL</variation>
    <location>
        <begin position="544"/>
        <end position="551"/>
    </location>
</feature>
<feature type="splice variant" id="VSP_015767" description="In isoform 2." evidence="6">
    <location>
        <begin position="552"/>
        <end position="594"/>
    </location>
</feature>
<feature type="mutagenesis site" description="Partial loss of binding to TNR." evidence="4">
    <original>L</original>
    <variation>I</variation>
    <location>
        <position position="372"/>
    </location>
</feature>
<feature type="mutagenesis site" description="Loss of binding to TNR." evidence="4">
    <original>E</original>
    <variation>Q</variation>
    <location>
        <position position="375"/>
    </location>
</feature>